<name>RECA_DICNV</name>
<organism>
    <name type="scientific">Dichelobacter nodosus (strain VCS1703A)</name>
    <dbReference type="NCBI Taxonomy" id="246195"/>
    <lineage>
        <taxon>Bacteria</taxon>
        <taxon>Pseudomonadati</taxon>
        <taxon>Pseudomonadota</taxon>
        <taxon>Gammaproteobacteria</taxon>
        <taxon>Cardiobacteriales</taxon>
        <taxon>Cardiobacteriaceae</taxon>
        <taxon>Dichelobacter</taxon>
    </lineage>
</organism>
<comment type="function">
    <text evidence="1">Can catalyze the hydrolysis of ATP in the presence of single-stranded DNA, the ATP-dependent uptake of single-stranded DNA by duplex DNA, and the ATP-dependent hybridization of homologous single-stranded DNAs. It interacts with LexA causing its activation and leading to its autocatalytic cleavage.</text>
</comment>
<comment type="subcellular location">
    <subcellularLocation>
        <location evidence="1">Cytoplasm</location>
    </subcellularLocation>
</comment>
<comment type="similarity">
    <text evidence="1">Belongs to the RecA family.</text>
</comment>
<evidence type="ECO:0000255" key="1">
    <source>
        <dbReference type="HAMAP-Rule" id="MF_00268"/>
    </source>
</evidence>
<feature type="chain" id="PRO_1000047912" description="Protein RecA">
    <location>
        <begin position="1"/>
        <end position="350"/>
    </location>
</feature>
<feature type="binding site" evidence="1">
    <location>
        <begin position="66"/>
        <end position="73"/>
    </location>
    <ligand>
        <name>ATP</name>
        <dbReference type="ChEBI" id="CHEBI:30616"/>
    </ligand>
</feature>
<dbReference type="EMBL" id="CP000513">
    <property type="protein sequence ID" value="ABQ13334.1"/>
    <property type="molecule type" value="Genomic_DNA"/>
</dbReference>
<dbReference type="RefSeq" id="WP_012030632.1">
    <property type="nucleotide sequence ID" value="NC_009446.1"/>
</dbReference>
<dbReference type="SMR" id="A5EW90"/>
<dbReference type="STRING" id="246195.DNO_0288"/>
<dbReference type="KEGG" id="dno:DNO_0288"/>
<dbReference type="eggNOG" id="COG0468">
    <property type="taxonomic scope" value="Bacteria"/>
</dbReference>
<dbReference type="HOGENOM" id="CLU_040469_3_2_6"/>
<dbReference type="OrthoDB" id="9776733at2"/>
<dbReference type="Proteomes" id="UP000000248">
    <property type="component" value="Chromosome"/>
</dbReference>
<dbReference type="GO" id="GO:0005829">
    <property type="term" value="C:cytosol"/>
    <property type="evidence" value="ECO:0007669"/>
    <property type="project" value="TreeGrafter"/>
</dbReference>
<dbReference type="GO" id="GO:0005524">
    <property type="term" value="F:ATP binding"/>
    <property type="evidence" value="ECO:0007669"/>
    <property type="project" value="UniProtKB-UniRule"/>
</dbReference>
<dbReference type="GO" id="GO:0016887">
    <property type="term" value="F:ATP hydrolysis activity"/>
    <property type="evidence" value="ECO:0007669"/>
    <property type="project" value="InterPro"/>
</dbReference>
<dbReference type="GO" id="GO:0140664">
    <property type="term" value="F:ATP-dependent DNA damage sensor activity"/>
    <property type="evidence" value="ECO:0007669"/>
    <property type="project" value="InterPro"/>
</dbReference>
<dbReference type="GO" id="GO:0003684">
    <property type="term" value="F:damaged DNA binding"/>
    <property type="evidence" value="ECO:0007669"/>
    <property type="project" value="UniProtKB-UniRule"/>
</dbReference>
<dbReference type="GO" id="GO:0003697">
    <property type="term" value="F:single-stranded DNA binding"/>
    <property type="evidence" value="ECO:0007669"/>
    <property type="project" value="UniProtKB-UniRule"/>
</dbReference>
<dbReference type="GO" id="GO:0006310">
    <property type="term" value="P:DNA recombination"/>
    <property type="evidence" value="ECO:0007669"/>
    <property type="project" value="UniProtKB-UniRule"/>
</dbReference>
<dbReference type="GO" id="GO:0006281">
    <property type="term" value="P:DNA repair"/>
    <property type="evidence" value="ECO:0007669"/>
    <property type="project" value="UniProtKB-UniRule"/>
</dbReference>
<dbReference type="GO" id="GO:0009432">
    <property type="term" value="P:SOS response"/>
    <property type="evidence" value="ECO:0007669"/>
    <property type="project" value="UniProtKB-UniRule"/>
</dbReference>
<dbReference type="CDD" id="cd00983">
    <property type="entry name" value="RecA"/>
    <property type="match status" value="1"/>
</dbReference>
<dbReference type="FunFam" id="3.40.50.300:FF:000087">
    <property type="entry name" value="Recombinase RecA"/>
    <property type="match status" value="1"/>
</dbReference>
<dbReference type="Gene3D" id="3.40.50.300">
    <property type="entry name" value="P-loop containing nucleotide triphosphate hydrolases"/>
    <property type="match status" value="1"/>
</dbReference>
<dbReference type="HAMAP" id="MF_00268">
    <property type="entry name" value="RecA"/>
    <property type="match status" value="1"/>
</dbReference>
<dbReference type="InterPro" id="IPR003593">
    <property type="entry name" value="AAA+_ATPase"/>
</dbReference>
<dbReference type="InterPro" id="IPR013765">
    <property type="entry name" value="DNA_recomb/repair_RecA"/>
</dbReference>
<dbReference type="InterPro" id="IPR020584">
    <property type="entry name" value="DNA_recomb/repair_RecA_CS"/>
</dbReference>
<dbReference type="InterPro" id="IPR027417">
    <property type="entry name" value="P-loop_NTPase"/>
</dbReference>
<dbReference type="InterPro" id="IPR049261">
    <property type="entry name" value="RecA-like_C"/>
</dbReference>
<dbReference type="InterPro" id="IPR049428">
    <property type="entry name" value="RecA-like_N"/>
</dbReference>
<dbReference type="InterPro" id="IPR020588">
    <property type="entry name" value="RecA_ATP-bd"/>
</dbReference>
<dbReference type="InterPro" id="IPR023400">
    <property type="entry name" value="RecA_C_sf"/>
</dbReference>
<dbReference type="InterPro" id="IPR020587">
    <property type="entry name" value="RecA_monomer-monomer_interface"/>
</dbReference>
<dbReference type="NCBIfam" id="TIGR02012">
    <property type="entry name" value="tigrfam_recA"/>
    <property type="match status" value="1"/>
</dbReference>
<dbReference type="PANTHER" id="PTHR45900:SF1">
    <property type="entry name" value="MITOCHONDRIAL DNA REPAIR PROTEIN RECA HOMOLOG-RELATED"/>
    <property type="match status" value="1"/>
</dbReference>
<dbReference type="PANTHER" id="PTHR45900">
    <property type="entry name" value="RECA"/>
    <property type="match status" value="1"/>
</dbReference>
<dbReference type="Pfam" id="PF00154">
    <property type="entry name" value="RecA"/>
    <property type="match status" value="1"/>
</dbReference>
<dbReference type="Pfam" id="PF21096">
    <property type="entry name" value="RecA_C"/>
    <property type="match status" value="1"/>
</dbReference>
<dbReference type="PRINTS" id="PR00142">
    <property type="entry name" value="RECA"/>
</dbReference>
<dbReference type="SMART" id="SM00382">
    <property type="entry name" value="AAA"/>
    <property type="match status" value="1"/>
</dbReference>
<dbReference type="SUPFAM" id="SSF52540">
    <property type="entry name" value="P-loop containing nucleoside triphosphate hydrolases"/>
    <property type="match status" value="1"/>
</dbReference>
<dbReference type="SUPFAM" id="SSF54752">
    <property type="entry name" value="RecA protein, C-terminal domain"/>
    <property type="match status" value="1"/>
</dbReference>
<dbReference type="PROSITE" id="PS00321">
    <property type="entry name" value="RECA_1"/>
    <property type="match status" value="1"/>
</dbReference>
<dbReference type="PROSITE" id="PS50162">
    <property type="entry name" value="RECA_2"/>
    <property type="match status" value="1"/>
</dbReference>
<dbReference type="PROSITE" id="PS50163">
    <property type="entry name" value="RECA_3"/>
    <property type="match status" value="1"/>
</dbReference>
<proteinExistence type="inferred from homology"/>
<gene>
    <name evidence="1" type="primary">recA</name>
    <name type="ordered locus">DNO_0288</name>
</gene>
<keyword id="KW-0067">ATP-binding</keyword>
<keyword id="KW-0963">Cytoplasm</keyword>
<keyword id="KW-0227">DNA damage</keyword>
<keyword id="KW-0233">DNA recombination</keyword>
<keyword id="KW-0234">DNA repair</keyword>
<keyword id="KW-0238">DNA-binding</keyword>
<keyword id="KW-0547">Nucleotide-binding</keyword>
<keyword id="KW-1185">Reference proteome</keyword>
<keyword id="KW-0742">SOS response</keyword>
<sequence length="350" mass="38083">MNEEQKKALTAVLTQLDKQFGKGTVMRLGEQVAAHDIQAISTGSLTLDIALGIGGLPKGRIVEIYGPESSGKTTMMLHVIAEAQKNGGTAAFIDAEHALDPIYARKLGVNTDDLYVTQPDTGEQALEICDALVRSGAFDVIVVDSVAALTPKAEIEGEMGDSHVGLQARLMSQALRKLTGNIKRANTLVVFINQIRMKIGVMFGSPETTTGGNALKFYASVRMDIRRIGSIKEGDEVLGNETRVKVVKNKVAPPFKQAEFDILYGQGVSREGEIIQLAVNADIMQKSGAWYSYRDEKIGQGKEKVRLYLKEHPDVAQEIETKIREKFIGGELHLPDAAGDEIDTSINDEE</sequence>
<accession>A5EW90</accession>
<reference key="1">
    <citation type="journal article" date="2007" name="Nat. Biotechnol.">
        <title>Genome sequence and identification of candidate vaccine antigens from the animal pathogen Dichelobacter nodosus.</title>
        <authorList>
            <person name="Myers G.S.A."/>
            <person name="Parker D."/>
            <person name="Al-Hasani K."/>
            <person name="Kennan R.M."/>
            <person name="Seemann T."/>
            <person name="Ren Q."/>
            <person name="Badger J.H."/>
            <person name="Selengut J.D."/>
            <person name="Deboy R.T."/>
            <person name="Tettelin H."/>
            <person name="Boyce J.D."/>
            <person name="McCarl V.P."/>
            <person name="Han X."/>
            <person name="Nelson W.C."/>
            <person name="Madupu R."/>
            <person name="Mohamoud Y."/>
            <person name="Holley T."/>
            <person name="Fedorova N."/>
            <person name="Khouri H."/>
            <person name="Bottomley S.P."/>
            <person name="Whittington R.J."/>
            <person name="Adler B."/>
            <person name="Songer J.G."/>
            <person name="Rood J.I."/>
            <person name="Paulsen I.T."/>
        </authorList>
    </citation>
    <scope>NUCLEOTIDE SEQUENCE [LARGE SCALE GENOMIC DNA]</scope>
    <source>
        <strain>VCS1703A</strain>
    </source>
</reference>
<protein>
    <recommendedName>
        <fullName evidence="1">Protein RecA</fullName>
    </recommendedName>
    <alternativeName>
        <fullName evidence="1">Recombinase A</fullName>
    </alternativeName>
</protein>